<name>Y2540_SHESW</name>
<accession>A1RL19</accession>
<comment type="similarity">
    <text evidence="1">Belongs to the UPF0434 family.</text>
</comment>
<reference key="1">
    <citation type="submission" date="2006-12" db="EMBL/GenBank/DDBJ databases">
        <title>Complete sequence of Shewanella sp. W3-18-1.</title>
        <authorList>
            <consortium name="US DOE Joint Genome Institute"/>
            <person name="Copeland A."/>
            <person name="Lucas S."/>
            <person name="Lapidus A."/>
            <person name="Barry K."/>
            <person name="Detter J.C."/>
            <person name="Glavina del Rio T."/>
            <person name="Hammon N."/>
            <person name="Israni S."/>
            <person name="Dalin E."/>
            <person name="Tice H."/>
            <person name="Pitluck S."/>
            <person name="Chain P."/>
            <person name="Malfatti S."/>
            <person name="Shin M."/>
            <person name="Vergez L."/>
            <person name="Schmutz J."/>
            <person name="Larimer F."/>
            <person name="Land M."/>
            <person name="Hauser L."/>
            <person name="Kyrpides N."/>
            <person name="Lykidis A."/>
            <person name="Tiedje J."/>
            <person name="Richardson P."/>
        </authorList>
    </citation>
    <scope>NUCLEOTIDE SEQUENCE [LARGE SCALE GENOMIC DNA]</scope>
    <source>
        <strain>W3-18-1</strain>
    </source>
</reference>
<organism>
    <name type="scientific">Shewanella sp. (strain W3-18-1)</name>
    <dbReference type="NCBI Taxonomy" id="351745"/>
    <lineage>
        <taxon>Bacteria</taxon>
        <taxon>Pseudomonadati</taxon>
        <taxon>Pseudomonadota</taxon>
        <taxon>Gammaproteobacteria</taxon>
        <taxon>Alteromonadales</taxon>
        <taxon>Shewanellaceae</taxon>
        <taxon>Shewanella</taxon>
    </lineage>
</organism>
<sequence>MAFDKKLLDIVACPVCKGKLEYDKTAQQLICKADKLAYPITEGIPVLLENRATPITETV</sequence>
<feature type="chain" id="PRO_0000291170" description="UPF0434 protein Sputw3181_2540">
    <location>
        <begin position="1"/>
        <end position="59"/>
    </location>
</feature>
<gene>
    <name type="ordered locus">Sputw3181_2540</name>
</gene>
<evidence type="ECO:0000255" key="1">
    <source>
        <dbReference type="HAMAP-Rule" id="MF_01187"/>
    </source>
</evidence>
<dbReference type="EMBL" id="CP000503">
    <property type="protein sequence ID" value="ABM25364.1"/>
    <property type="molecule type" value="Genomic_DNA"/>
</dbReference>
<dbReference type="RefSeq" id="WP_011789824.1">
    <property type="nucleotide sequence ID" value="NC_008750.1"/>
</dbReference>
<dbReference type="SMR" id="A1RL19"/>
<dbReference type="KEGG" id="shw:Sputw3181_2540"/>
<dbReference type="HOGENOM" id="CLU_155659_3_1_6"/>
<dbReference type="Proteomes" id="UP000002597">
    <property type="component" value="Chromosome"/>
</dbReference>
<dbReference type="GO" id="GO:0005829">
    <property type="term" value="C:cytosol"/>
    <property type="evidence" value="ECO:0007669"/>
    <property type="project" value="TreeGrafter"/>
</dbReference>
<dbReference type="FunFam" id="2.20.25.10:FF:000002">
    <property type="entry name" value="UPF0434 protein YcaR"/>
    <property type="match status" value="1"/>
</dbReference>
<dbReference type="Gene3D" id="2.20.25.10">
    <property type="match status" value="1"/>
</dbReference>
<dbReference type="HAMAP" id="MF_01187">
    <property type="entry name" value="UPF0434"/>
    <property type="match status" value="1"/>
</dbReference>
<dbReference type="InterPro" id="IPR005651">
    <property type="entry name" value="Trm112-like"/>
</dbReference>
<dbReference type="PANTHER" id="PTHR33505:SF4">
    <property type="entry name" value="PROTEIN PREY, MITOCHONDRIAL"/>
    <property type="match status" value="1"/>
</dbReference>
<dbReference type="PANTHER" id="PTHR33505">
    <property type="entry name" value="ZGC:162634"/>
    <property type="match status" value="1"/>
</dbReference>
<dbReference type="Pfam" id="PF03966">
    <property type="entry name" value="Trm112p"/>
    <property type="match status" value="1"/>
</dbReference>
<dbReference type="SUPFAM" id="SSF158997">
    <property type="entry name" value="Trm112p-like"/>
    <property type="match status" value="1"/>
</dbReference>
<protein>
    <recommendedName>
        <fullName evidence="1">UPF0434 protein Sputw3181_2540</fullName>
    </recommendedName>
</protein>
<proteinExistence type="inferred from homology"/>